<dbReference type="EMBL" id="AB075515">
    <property type="protein sequence ID" value="BAE45760.1"/>
    <property type="molecule type" value="mRNA"/>
</dbReference>
<dbReference type="EMBL" id="AK023179">
    <property type="protein sequence ID" value="BAB14448.1"/>
    <property type="status" value="ALT_INIT"/>
    <property type="molecule type" value="mRNA"/>
</dbReference>
<dbReference type="EMBL" id="AK023202">
    <property type="protein sequence ID" value="BAB14460.1"/>
    <property type="molecule type" value="mRNA"/>
</dbReference>
<dbReference type="EMBL" id="AK024678">
    <property type="protein sequence ID" value="BAB14958.1"/>
    <property type="status" value="ALT_INIT"/>
    <property type="molecule type" value="mRNA"/>
</dbReference>
<dbReference type="EMBL" id="AK292334">
    <property type="protein sequence ID" value="BAF85023.1"/>
    <property type="molecule type" value="mRNA"/>
</dbReference>
<dbReference type="EMBL" id="CH471111">
    <property type="protein sequence ID" value="EAW58068.1"/>
    <property type="molecule type" value="Genomic_DNA"/>
</dbReference>
<dbReference type="EMBL" id="BC048299">
    <property type="protein sequence ID" value="AAH48299.1"/>
    <property type="molecule type" value="mRNA"/>
</dbReference>
<dbReference type="CCDS" id="CCDS31794.1"/>
<dbReference type="RefSeq" id="NP_001280214.1">
    <property type="nucleotide sequence ID" value="NM_001293285.2"/>
</dbReference>
<dbReference type="RefSeq" id="NP_001280215.1">
    <property type="nucleotide sequence ID" value="NM_001293286.2"/>
</dbReference>
<dbReference type="RefSeq" id="NP_075559.2">
    <property type="nucleotide sequence ID" value="NM_023071.4"/>
</dbReference>
<dbReference type="RefSeq" id="XP_011536992.1">
    <property type="nucleotide sequence ID" value="XM_011538690.2"/>
</dbReference>
<dbReference type="RefSeq" id="XP_011536993.1">
    <property type="nucleotide sequence ID" value="XM_011538691.4"/>
</dbReference>
<dbReference type="RefSeq" id="XP_047285360.1">
    <property type="nucleotide sequence ID" value="XM_047429404.1"/>
</dbReference>
<dbReference type="RefSeq" id="XP_047285361.1">
    <property type="nucleotide sequence ID" value="XM_047429405.1"/>
</dbReference>
<dbReference type="RefSeq" id="XP_047285362.1">
    <property type="nucleotide sequence ID" value="XM_047429406.1"/>
</dbReference>
<dbReference type="RefSeq" id="XP_047285363.1">
    <property type="nucleotide sequence ID" value="XM_047429407.1"/>
</dbReference>
<dbReference type="RefSeq" id="XP_047285364.1">
    <property type="nucleotide sequence ID" value="XM_047429408.1"/>
</dbReference>
<dbReference type="RefSeq" id="XP_047285365.1">
    <property type="nucleotide sequence ID" value="XM_047429409.1"/>
</dbReference>
<dbReference type="RefSeq" id="XP_047285366.1">
    <property type="nucleotide sequence ID" value="XM_047429410.1"/>
</dbReference>
<dbReference type="RefSeq" id="XP_054228956.1">
    <property type="nucleotide sequence ID" value="XM_054372981.1"/>
</dbReference>
<dbReference type="RefSeq" id="XP_054228957.1">
    <property type="nucleotide sequence ID" value="XM_054372982.1"/>
</dbReference>
<dbReference type="RefSeq" id="XP_054228958.1">
    <property type="nucleotide sequence ID" value="XM_054372983.1"/>
</dbReference>
<dbReference type="RefSeq" id="XP_054228959.1">
    <property type="nucleotide sequence ID" value="XM_054372984.1"/>
</dbReference>
<dbReference type="RefSeq" id="XP_054228960.1">
    <property type="nucleotide sequence ID" value="XM_054372985.1"/>
</dbReference>
<dbReference type="RefSeq" id="XP_054228961.1">
    <property type="nucleotide sequence ID" value="XM_054372986.1"/>
</dbReference>
<dbReference type="RefSeq" id="XP_054228962.1">
    <property type="nucleotide sequence ID" value="XM_054372987.1"/>
</dbReference>
<dbReference type="RefSeq" id="XP_054228963.1">
    <property type="nucleotide sequence ID" value="XM_054372988.1"/>
</dbReference>
<dbReference type="BioGRID" id="122410">
    <property type="interactions" value="166"/>
</dbReference>
<dbReference type="FunCoup" id="Q86XZ4">
    <property type="interactions" value="2118"/>
</dbReference>
<dbReference type="IntAct" id="Q86XZ4">
    <property type="interactions" value="82"/>
</dbReference>
<dbReference type="MINT" id="Q86XZ4"/>
<dbReference type="STRING" id="9606.ENSP00000448228"/>
<dbReference type="GlyGen" id="Q86XZ4">
    <property type="glycosylation" value="3 sites, 1 N-linked glycan (1 site), 1 O-linked glycan (1 site)"/>
</dbReference>
<dbReference type="iPTMnet" id="Q86XZ4"/>
<dbReference type="MetOSite" id="Q86XZ4"/>
<dbReference type="PhosphoSitePlus" id="Q86XZ4"/>
<dbReference type="BioMuta" id="SPATS2"/>
<dbReference type="DMDM" id="74750549"/>
<dbReference type="jPOST" id="Q86XZ4"/>
<dbReference type="MassIVE" id="Q86XZ4"/>
<dbReference type="PaxDb" id="9606-ENSP00000448228"/>
<dbReference type="PeptideAtlas" id="Q86XZ4"/>
<dbReference type="ProteomicsDB" id="70343"/>
<dbReference type="Pumba" id="Q86XZ4"/>
<dbReference type="Antibodypedia" id="48974">
    <property type="antibodies" value="42 antibodies from 13 providers"/>
</dbReference>
<dbReference type="DNASU" id="65244"/>
<dbReference type="Ensembl" id="ENST00000321898.10">
    <property type="protein sequence ID" value="ENSP00000326841.6"/>
    <property type="gene ID" value="ENSG00000123352.18"/>
</dbReference>
<dbReference type="Ensembl" id="ENST00000552918.6">
    <property type="protein sequence ID" value="ENSP00000447947.2"/>
    <property type="gene ID" value="ENSG00000123352.18"/>
</dbReference>
<dbReference type="Ensembl" id="ENST00000553127.5">
    <property type="protein sequence ID" value="ENSP00000448228.1"/>
    <property type="gene ID" value="ENSG00000123352.18"/>
</dbReference>
<dbReference type="GeneID" id="65244"/>
<dbReference type="KEGG" id="hsa:65244"/>
<dbReference type="MANE-Select" id="ENST00000552918.6">
    <property type="protein sequence ID" value="ENSP00000447947.2"/>
    <property type="RefSeq nucleotide sequence ID" value="NM_023071.4"/>
    <property type="RefSeq protein sequence ID" value="NP_075559.2"/>
</dbReference>
<dbReference type="UCSC" id="uc001rud.3">
    <property type="organism name" value="human"/>
</dbReference>
<dbReference type="AGR" id="HGNC:18650"/>
<dbReference type="CTD" id="65244"/>
<dbReference type="DisGeNET" id="65244"/>
<dbReference type="GeneCards" id="SPATS2"/>
<dbReference type="HGNC" id="HGNC:18650">
    <property type="gene designation" value="SPATS2"/>
</dbReference>
<dbReference type="HPA" id="ENSG00000123352">
    <property type="expression patterns" value="Low tissue specificity"/>
</dbReference>
<dbReference type="MIM" id="611667">
    <property type="type" value="gene"/>
</dbReference>
<dbReference type="neXtProt" id="NX_Q86XZ4"/>
<dbReference type="OpenTargets" id="ENSG00000123352"/>
<dbReference type="PharmGKB" id="PA134871579"/>
<dbReference type="VEuPathDB" id="HostDB:ENSG00000123352"/>
<dbReference type="eggNOG" id="ENOG502QY9Y">
    <property type="taxonomic scope" value="Eukaryota"/>
</dbReference>
<dbReference type="GeneTree" id="ENSGT00390000001138"/>
<dbReference type="HOGENOM" id="CLU_037089_0_0_1"/>
<dbReference type="InParanoid" id="Q86XZ4"/>
<dbReference type="OMA" id="QAFMEXN"/>
<dbReference type="OrthoDB" id="6136201at2759"/>
<dbReference type="PAN-GO" id="Q86XZ4">
    <property type="GO annotations" value="1 GO annotation based on evolutionary models"/>
</dbReference>
<dbReference type="PhylomeDB" id="Q86XZ4"/>
<dbReference type="TreeFam" id="TF320553"/>
<dbReference type="PathwayCommons" id="Q86XZ4"/>
<dbReference type="SignaLink" id="Q86XZ4"/>
<dbReference type="BioGRID-ORCS" id="65244">
    <property type="hits" value="17 hits in 1156 CRISPR screens"/>
</dbReference>
<dbReference type="CD-CODE" id="DEE660B4">
    <property type="entry name" value="Stress granule"/>
</dbReference>
<dbReference type="ChiTaRS" id="SPATS2">
    <property type="organism name" value="human"/>
</dbReference>
<dbReference type="GenomeRNAi" id="65244"/>
<dbReference type="Pharos" id="Q86XZ4">
    <property type="development level" value="Tdark"/>
</dbReference>
<dbReference type="PRO" id="PR:Q86XZ4"/>
<dbReference type="Proteomes" id="UP000005640">
    <property type="component" value="Chromosome 12"/>
</dbReference>
<dbReference type="RNAct" id="Q86XZ4">
    <property type="molecule type" value="protein"/>
</dbReference>
<dbReference type="Bgee" id="ENSG00000123352">
    <property type="expression patterns" value="Expressed in primordial germ cell in gonad and 188 other cell types or tissues"/>
</dbReference>
<dbReference type="ExpressionAtlas" id="Q86XZ4">
    <property type="expression patterns" value="baseline and differential"/>
</dbReference>
<dbReference type="GO" id="GO:0005737">
    <property type="term" value="C:cytoplasm"/>
    <property type="evidence" value="ECO:0000318"/>
    <property type="project" value="GO_Central"/>
</dbReference>
<dbReference type="GO" id="GO:0005829">
    <property type="term" value="C:cytosol"/>
    <property type="evidence" value="ECO:0000314"/>
    <property type="project" value="HPA"/>
</dbReference>
<dbReference type="GO" id="GO:0003723">
    <property type="term" value="F:RNA binding"/>
    <property type="evidence" value="ECO:0007005"/>
    <property type="project" value="UniProtKB"/>
</dbReference>
<dbReference type="InterPro" id="IPR009816">
    <property type="entry name" value="SPATS2-like"/>
</dbReference>
<dbReference type="InterPro" id="IPR009060">
    <property type="entry name" value="UBA-like_sf"/>
</dbReference>
<dbReference type="PANTHER" id="PTHR15623:SF10">
    <property type="entry name" value="SPERMATOGENESIS-ASSOCIATED SERINE-RICH PROTEIN 2"/>
    <property type="match status" value="1"/>
</dbReference>
<dbReference type="PANTHER" id="PTHR15623">
    <property type="entry name" value="SPERMATOGENESIS-ASSOCIATED SERINE-RICH PROTEIN 2-RELATED"/>
    <property type="match status" value="1"/>
</dbReference>
<dbReference type="Pfam" id="PF07139">
    <property type="entry name" value="SPATS2-like"/>
    <property type="match status" value="1"/>
</dbReference>
<dbReference type="SUPFAM" id="SSF46934">
    <property type="entry name" value="UBA-like"/>
    <property type="match status" value="1"/>
</dbReference>
<accession>Q86XZ4</accession>
<accession>A8K8G9</accession>
<accession>Q9H7D4</accession>
<accession>Q9H8Y7</accession>
<accession>Q9H8Z8</accession>
<gene>
    <name type="primary">SPATS2</name>
    <name type="synonym">SCR59</name>
    <name type="synonym">SPATA10</name>
    <name type="ORF">Nbla00526</name>
</gene>
<protein>
    <recommendedName>
        <fullName>Spermatogenesis-associated serine-rich protein 2</fullName>
    </recommendedName>
    <alternativeName>
        <fullName>Serine-rich spermatocytes and round spermatid 59 kDa protein</fullName>
    </alternativeName>
    <alternativeName>
        <fullName>p59scr</fullName>
    </alternativeName>
</protein>
<name>SPAS2_HUMAN</name>
<organism>
    <name type="scientific">Homo sapiens</name>
    <name type="common">Human</name>
    <dbReference type="NCBI Taxonomy" id="9606"/>
    <lineage>
        <taxon>Eukaryota</taxon>
        <taxon>Metazoa</taxon>
        <taxon>Chordata</taxon>
        <taxon>Craniata</taxon>
        <taxon>Vertebrata</taxon>
        <taxon>Euteleostomi</taxon>
        <taxon>Mammalia</taxon>
        <taxon>Eutheria</taxon>
        <taxon>Euarchontoglires</taxon>
        <taxon>Primates</taxon>
        <taxon>Haplorrhini</taxon>
        <taxon>Catarrhini</taxon>
        <taxon>Hominidae</taxon>
        <taxon>Homo</taxon>
    </lineage>
</organism>
<evidence type="ECO:0000250" key="1"/>
<evidence type="ECO:0000250" key="2">
    <source>
        <dbReference type="UniProtKB" id="Q8K1N4"/>
    </source>
</evidence>
<evidence type="ECO:0000256" key="3">
    <source>
        <dbReference type="SAM" id="MobiDB-lite"/>
    </source>
</evidence>
<evidence type="ECO:0000305" key="4"/>
<evidence type="ECO:0007744" key="5">
    <source>
    </source>
</evidence>
<evidence type="ECO:0007744" key="6">
    <source>
    </source>
</evidence>
<comment type="subcellular location">
    <subcellularLocation>
        <location evidence="1">Cytoplasm</location>
    </subcellularLocation>
</comment>
<comment type="similarity">
    <text evidence="4">Belongs to the SPATS2 family.</text>
</comment>
<comment type="sequence caution" evidence="4">
    <conflict type="erroneous initiation">
        <sequence resource="EMBL-CDS" id="BAB14448"/>
    </conflict>
</comment>
<comment type="sequence caution" evidence="4">
    <conflict type="erroneous initiation">
        <sequence resource="EMBL-CDS" id="BAB14958"/>
    </conflict>
</comment>
<feature type="chain" id="PRO_0000307697" description="Spermatogenesis-associated serine-rich protein 2">
    <location>
        <begin position="1"/>
        <end position="545"/>
    </location>
</feature>
<feature type="region of interest" description="Disordered" evidence="3">
    <location>
        <begin position="85"/>
        <end position="137"/>
    </location>
</feature>
<feature type="region of interest" description="Disordered" evidence="3">
    <location>
        <begin position="197"/>
        <end position="216"/>
    </location>
</feature>
<feature type="region of interest" description="Disordered" evidence="3">
    <location>
        <begin position="369"/>
        <end position="545"/>
    </location>
</feature>
<feature type="compositionally biased region" description="Basic residues" evidence="3">
    <location>
        <begin position="85"/>
        <end position="96"/>
    </location>
</feature>
<feature type="compositionally biased region" description="Polar residues" evidence="3">
    <location>
        <begin position="106"/>
        <end position="123"/>
    </location>
</feature>
<feature type="compositionally biased region" description="Polar residues" evidence="3">
    <location>
        <begin position="369"/>
        <end position="378"/>
    </location>
</feature>
<feature type="compositionally biased region" description="Low complexity" evidence="3">
    <location>
        <begin position="379"/>
        <end position="415"/>
    </location>
</feature>
<feature type="compositionally biased region" description="Low complexity" evidence="3">
    <location>
        <begin position="475"/>
        <end position="490"/>
    </location>
</feature>
<feature type="compositionally biased region" description="Polar residues" evidence="3">
    <location>
        <begin position="491"/>
        <end position="514"/>
    </location>
</feature>
<feature type="modified residue" description="Phosphoserine" evidence="2">
    <location>
        <position position="143"/>
    </location>
</feature>
<feature type="modified residue" description="Phosphoserine" evidence="6">
    <location>
        <position position="146"/>
    </location>
</feature>
<feature type="modified residue" description="Phosphoserine" evidence="2">
    <location>
        <position position="148"/>
    </location>
</feature>
<feature type="modified residue" description="Phosphoserine" evidence="5">
    <location>
        <position position="520"/>
    </location>
</feature>
<feature type="sequence conflict" description="In Ref. 2; BAB14958." evidence="4" ref="2">
    <original>S</original>
    <variation>N</variation>
    <location>
        <position position="393"/>
    </location>
</feature>
<feature type="sequence conflict" description="In Ref. 2; BAB14460." evidence="4" ref="2">
    <original>G</original>
    <variation>R</variation>
    <location>
        <position position="514"/>
    </location>
</feature>
<proteinExistence type="evidence at protein level"/>
<reference key="1">
    <citation type="journal article" date="2003" name="Cancer Lett.">
        <title>Neuroblastoma oligo-capping cDNA project: toward the understanding of the genesis and biology of neuroblastoma.</title>
        <authorList>
            <person name="Ohira M."/>
            <person name="Morohashi A."/>
            <person name="Nakamura Y."/>
            <person name="Isogai E."/>
            <person name="Furuya K."/>
            <person name="Hamano S."/>
            <person name="Machida T."/>
            <person name="Aoyama M."/>
            <person name="Fukumura M."/>
            <person name="Miyazaki K."/>
            <person name="Suzuki Y."/>
            <person name="Sugano S."/>
            <person name="Hirato J."/>
            <person name="Nakagawara A."/>
        </authorList>
    </citation>
    <scope>NUCLEOTIDE SEQUENCE [LARGE SCALE MRNA]</scope>
    <source>
        <tissue>Neuroblastoma</tissue>
    </source>
</reference>
<reference key="2">
    <citation type="journal article" date="2004" name="Nat. Genet.">
        <title>Complete sequencing and characterization of 21,243 full-length human cDNAs.</title>
        <authorList>
            <person name="Ota T."/>
            <person name="Suzuki Y."/>
            <person name="Nishikawa T."/>
            <person name="Otsuki T."/>
            <person name="Sugiyama T."/>
            <person name="Irie R."/>
            <person name="Wakamatsu A."/>
            <person name="Hayashi K."/>
            <person name="Sato H."/>
            <person name="Nagai K."/>
            <person name="Kimura K."/>
            <person name="Makita H."/>
            <person name="Sekine M."/>
            <person name="Obayashi M."/>
            <person name="Nishi T."/>
            <person name="Shibahara T."/>
            <person name="Tanaka T."/>
            <person name="Ishii S."/>
            <person name="Yamamoto J."/>
            <person name="Saito K."/>
            <person name="Kawai Y."/>
            <person name="Isono Y."/>
            <person name="Nakamura Y."/>
            <person name="Nagahari K."/>
            <person name="Murakami K."/>
            <person name="Yasuda T."/>
            <person name="Iwayanagi T."/>
            <person name="Wagatsuma M."/>
            <person name="Shiratori A."/>
            <person name="Sudo H."/>
            <person name="Hosoiri T."/>
            <person name="Kaku Y."/>
            <person name="Kodaira H."/>
            <person name="Kondo H."/>
            <person name="Sugawara M."/>
            <person name="Takahashi M."/>
            <person name="Kanda K."/>
            <person name="Yokoi T."/>
            <person name="Furuya T."/>
            <person name="Kikkawa E."/>
            <person name="Omura Y."/>
            <person name="Abe K."/>
            <person name="Kamihara K."/>
            <person name="Katsuta N."/>
            <person name="Sato K."/>
            <person name="Tanikawa M."/>
            <person name="Yamazaki M."/>
            <person name="Ninomiya K."/>
            <person name="Ishibashi T."/>
            <person name="Yamashita H."/>
            <person name="Murakawa K."/>
            <person name="Fujimori K."/>
            <person name="Tanai H."/>
            <person name="Kimata M."/>
            <person name="Watanabe M."/>
            <person name="Hiraoka S."/>
            <person name="Chiba Y."/>
            <person name="Ishida S."/>
            <person name="Ono Y."/>
            <person name="Takiguchi S."/>
            <person name="Watanabe S."/>
            <person name="Yosida M."/>
            <person name="Hotuta T."/>
            <person name="Kusano J."/>
            <person name="Kanehori K."/>
            <person name="Takahashi-Fujii A."/>
            <person name="Hara H."/>
            <person name="Tanase T.-O."/>
            <person name="Nomura Y."/>
            <person name="Togiya S."/>
            <person name="Komai F."/>
            <person name="Hara R."/>
            <person name="Takeuchi K."/>
            <person name="Arita M."/>
            <person name="Imose N."/>
            <person name="Musashino K."/>
            <person name="Yuuki H."/>
            <person name="Oshima A."/>
            <person name="Sasaki N."/>
            <person name="Aotsuka S."/>
            <person name="Yoshikawa Y."/>
            <person name="Matsunawa H."/>
            <person name="Ichihara T."/>
            <person name="Shiohata N."/>
            <person name="Sano S."/>
            <person name="Moriya S."/>
            <person name="Momiyama H."/>
            <person name="Satoh N."/>
            <person name="Takami S."/>
            <person name="Terashima Y."/>
            <person name="Suzuki O."/>
            <person name="Nakagawa S."/>
            <person name="Senoh A."/>
            <person name="Mizoguchi H."/>
            <person name="Goto Y."/>
            <person name="Shimizu F."/>
            <person name="Wakebe H."/>
            <person name="Hishigaki H."/>
            <person name="Watanabe T."/>
            <person name="Sugiyama A."/>
            <person name="Takemoto M."/>
            <person name="Kawakami B."/>
            <person name="Yamazaki M."/>
            <person name="Watanabe K."/>
            <person name="Kumagai A."/>
            <person name="Itakura S."/>
            <person name="Fukuzumi Y."/>
            <person name="Fujimori Y."/>
            <person name="Komiyama M."/>
            <person name="Tashiro H."/>
            <person name="Tanigami A."/>
            <person name="Fujiwara T."/>
            <person name="Ono T."/>
            <person name="Yamada K."/>
            <person name="Fujii Y."/>
            <person name="Ozaki K."/>
            <person name="Hirao M."/>
            <person name="Ohmori Y."/>
            <person name="Kawabata A."/>
            <person name="Hikiji T."/>
            <person name="Kobatake N."/>
            <person name="Inagaki H."/>
            <person name="Ikema Y."/>
            <person name="Okamoto S."/>
            <person name="Okitani R."/>
            <person name="Kawakami T."/>
            <person name="Noguchi S."/>
            <person name="Itoh T."/>
            <person name="Shigeta K."/>
            <person name="Senba T."/>
            <person name="Matsumura K."/>
            <person name="Nakajima Y."/>
            <person name="Mizuno T."/>
            <person name="Morinaga M."/>
            <person name="Sasaki M."/>
            <person name="Togashi T."/>
            <person name="Oyama M."/>
            <person name="Hata H."/>
            <person name="Watanabe M."/>
            <person name="Komatsu T."/>
            <person name="Mizushima-Sugano J."/>
            <person name="Satoh T."/>
            <person name="Shirai Y."/>
            <person name="Takahashi Y."/>
            <person name="Nakagawa K."/>
            <person name="Okumura K."/>
            <person name="Nagase T."/>
            <person name="Nomura N."/>
            <person name="Kikuchi H."/>
            <person name="Masuho Y."/>
            <person name="Yamashita R."/>
            <person name="Nakai K."/>
            <person name="Yada T."/>
            <person name="Nakamura Y."/>
            <person name="Ohara O."/>
            <person name="Isogai T."/>
            <person name="Sugano S."/>
        </authorList>
    </citation>
    <scope>NUCLEOTIDE SEQUENCE [LARGE SCALE MRNA]</scope>
    <source>
        <tissue>Testis</tissue>
    </source>
</reference>
<reference key="3">
    <citation type="submission" date="2005-07" db="EMBL/GenBank/DDBJ databases">
        <authorList>
            <person name="Mural R.J."/>
            <person name="Istrail S."/>
            <person name="Sutton G.G."/>
            <person name="Florea L."/>
            <person name="Halpern A.L."/>
            <person name="Mobarry C.M."/>
            <person name="Lippert R."/>
            <person name="Walenz B."/>
            <person name="Shatkay H."/>
            <person name="Dew I."/>
            <person name="Miller J.R."/>
            <person name="Flanigan M.J."/>
            <person name="Edwards N.J."/>
            <person name="Bolanos R."/>
            <person name="Fasulo D."/>
            <person name="Halldorsson B.V."/>
            <person name="Hannenhalli S."/>
            <person name="Turner R."/>
            <person name="Yooseph S."/>
            <person name="Lu F."/>
            <person name="Nusskern D.R."/>
            <person name="Shue B.C."/>
            <person name="Zheng X.H."/>
            <person name="Zhong F."/>
            <person name="Delcher A.L."/>
            <person name="Huson D.H."/>
            <person name="Kravitz S.A."/>
            <person name="Mouchard L."/>
            <person name="Reinert K."/>
            <person name="Remington K.A."/>
            <person name="Clark A.G."/>
            <person name="Waterman M.S."/>
            <person name="Eichler E.E."/>
            <person name="Adams M.D."/>
            <person name="Hunkapiller M.W."/>
            <person name="Myers E.W."/>
            <person name="Venter J.C."/>
        </authorList>
    </citation>
    <scope>NUCLEOTIDE SEQUENCE [LARGE SCALE GENOMIC DNA]</scope>
</reference>
<reference key="4">
    <citation type="journal article" date="2004" name="Genome Res.">
        <title>The status, quality, and expansion of the NIH full-length cDNA project: the Mammalian Gene Collection (MGC).</title>
        <authorList>
            <consortium name="The MGC Project Team"/>
        </authorList>
    </citation>
    <scope>NUCLEOTIDE SEQUENCE [LARGE SCALE MRNA]</scope>
    <source>
        <tissue>Uterus</tissue>
    </source>
</reference>
<reference key="5">
    <citation type="journal article" date="2008" name="Proc. Natl. Acad. Sci. U.S.A.">
        <title>A quantitative atlas of mitotic phosphorylation.</title>
        <authorList>
            <person name="Dephoure N."/>
            <person name="Zhou C."/>
            <person name="Villen J."/>
            <person name="Beausoleil S.A."/>
            <person name="Bakalarski C.E."/>
            <person name="Elledge S.J."/>
            <person name="Gygi S.P."/>
        </authorList>
    </citation>
    <scope>PHOSPHORYLATION [LARGE SCALE ANALYSIS] AT SER-520</scope>
    <scope>IDENTIFICATION BY MASS SPECTROMETRY [LARGE SCALE ANALYSIS]</scope>
    <source>
        <tissue>Cervix carcinoma</tissue>
    </source>
</reference>
<reference key="6">
    <citation type="journal article" date="2009" name="Sci. Signal.">
        <title>Quantitative phosphoproteomic analysis of T cell receptor signaling reveals system-wide modulation of protein-protein interactions.</title>
        <authorList>
            <person name="Mayya V."/>
            <person name="Lundgren D.H."/>
            <person name="Hwang S.-I."/>
            <person name="Rezaul K."/>
            <person name="Wu L."/>
            <person name="Eng J.K."/>
            <person name="Rodionov V."/>
            <person name="Han D.K."/>
        </authorList>
    </citation>
    <scope>PHOSPHORYLATION [LARGE SCALE ANALYSIS] AT SER-146</scope>
    <scope>IDENTIFICATION BY MASS SPECTROMETRY [LARGE SCALE ANALYSIS]</scope>
    <source>
        <tissue>Leukemic T-cell</tissue>
    </source>
</reference>
<reference key="7">
    <citation type="journal article" date="2014" name="J. Proteomics">
        <title>An enzyme assisted RP-RPLC approach for in-depth analysis of human liver phosphoproteome.</title>
        <authorList>
            <person name="Bian Y."/>
            <person name="Song C."/>
            <person name="Cheng K."/>
            <person name="Dong M."/>
            <person name="Wang F."/>
            <person name="Huang J."/>
            <person name="Sun D."/>
            <person name="Wang L."/>
            <person name="Ye M."/>
            <person name="Zou H."/>
        </authorList>
    </citation>
    <scope>IDENTIFICATION BY MASS SPECTROMETRY [LARGE SCALE ANALYSIS]</scope>
    <source>
        <tissue>Liver</tissue>
    </source>
</reference>
<keyword id="KW-0963">Cytoplasm</keyword>
<keyword id="KW-0597">Phosphoprotein</keyword>
<keyword id="KW-1267">Proteomics identification</keyword>
<keyword id="KW-1185">Reference proteome</keyword>
<sequence>MSRKQNQKDSSGFIFDLQSNTVLAQGGAFENMKEKINAVRAIVPNKSNNEIILVLQHFDNCVDKTVQAFMEGSASEVLKEWTVTGKKKNKKKKNKPKPAAEPSNGIPDSSKSVSIQEEQSAPSSEKGGMNGYHVNGAINDTESVDSLSEGLETLSIDARELEDPESAMLDTLDRTGSMLQNGVSDFETKSLTMHSIHNSQQPRNAAKSLSRPTTETQFSNMGMEDVPLATSKKLSSNIEKSVKDLQRCTVSLARYRVVVKEEMDASIKKMKQAFAELESCLMDREVALLAEMDKVKAEAMEILLSRQKKAELLKKMTHVAVQMSEQQLVELRADIKHFVSERKYDEDLGRVARFTCDVETLKKSIDSFGQVSHPKNSYSTRSRCSSVTSVSLSSPSDASAASSSTCASPPSLTSANKKNFAPGETPAAIANSSGQPYQPLREVLPGNRRGGQGYRPQGQKSNDPMNQGRHDSMGRYRNSSWYSSGSRYQSAPSQAPGNTIERGQTHSAGTNGTGVSMEPSPPTPSFKKGLPQRKPRTSQTEAVNS</sequence>